<dbReference type="EC" id="1.14.19.80" evidence="3"/>
<dbReference type="EMBL" id="OM304290">
    <property type="protein sequence ID" value="UQZ09621.1"/>
    <property type="molecule type" value="mRNA"/>
</dbReference>
<dbReference type="SMR" id="P0DO79"/>
<dbReference type="KEGG" id="ag:UQZ09621"/>
<dbReference type="GO" id="GO:0016020">
    <property type="term" value="C:membrane"/>
    <property type="evidence" value="ECO:0007669"/>
    <property type="project" value="UniProtKB-SubCell"/>
</dbReference>
<dbReference type="GO" id="GO:0020037">
    <property type="term" value="F:heme binding"/>
    <property type="evidence" value="ECO:0007669"/>
    <property type="project" value="InterPro"/>
</dbReference>
<dbReference type="GO" id="GO:0005506">
    <property type="term" value="F:iron ion binding"/>
    <property type="evidence" value="ECO:0007669"/>
    <property type="project" value="InterPro"/>
</dbReference>
<dbReference type="GO" id="GO:0004497">
    <property type="term" value="F:monooxygenase activity"/>
    <property type="evidence" value="ECO:0000314"/>
    <property type="project" value="UniProtKB"/>
</dbReference>
<dbReference type="GO" id="GO:0016705">
    <property type="term" value="F:oxidoreductase activity, acting on paired donors, with incorporation or reduction of molecular oxygen"/>
    <property type="evidence" value="ECO:0007669"/>
    <property type="project" value="InterPro"/>
</dbReference>
<dbReference type="GO" id="GO:0009821">
    <property type="term" value="P:alkaloid biosynthetic process"/>
    <property type="evidence" value="ECO:0000314"/>
    <property type="project" value="UniProtKB"/>
</dbReference>
<dbReference type="CDD" id="cd11072">
    <property type="entry name" value="CYP71-like"/>
    <property type="match status" value="1"/>
</dbReference>
<dbReference type="FunFam" id="1.10.630.10:FF:000043">
    <property type="entry name" value="Cytochrome P450 99A2"/>
    <property type="match status" value="1"/>
</dbReference>
<dbReference type="Gene3D" id="1.10.630.10">
    <property type="entry name" value="Cytochrome P450"/>
    <property type="match status" value="1"/>
</dbReference>
<dbReference type="InterPro" id="IPR001128">
    <property type="entry name" value="Cyt_P450"/>
</dbReference>
<dbReference type="InterPro" id="IPR017972">
    <property type="entry name" value="Cyt_P450_CS"/>
</dbReference>
<dbReference type="InterPro" id="IPR002401">
    <property type="entry name" value="Cyt_P450_E_grp-I"/>
</dbReference>
<dbReference type="InterPro" id="IPR036396">
    <property type="entry name" value="Cyt_P450_sf"/>
</dbReference>
<dbReference type="PANTHER" id="PTHR47955:SF8">
    <property type="entry name" value="CYTOCHROME P450 71D11-LIKE"/>
    <property type="match status" value="1"/>
</dbReference>
<dbReference type="PANTHER" id="PTHR47955">
    <property type="entry name" value="CYTOCHROME P450 FAMILY 71 PROTEIN"/>
    <property type="match status" value="1"/>
</dbReference>
<dbReference type="Pfam" id="PF00067">
    <property type="entry name" value="p450"/>
    <property type="match status" value="1"/>
</dbReference>
<dbReference type="PRINTS" id="PR00463">
    <property type="entry name" value="EP450I"/>
</dbReference>
<dbReference type="PRINTS" id="PR00385">
    <property type="entry name" value="P450"/>
</dbReference>
<dbReference type="SUPFAM" id="SSF48264">
    <property type="entry name" value="Cytochrome P450"/>
    <property type="match status" value="1"/>
</dbReference>
<dbReference type="PROSITE" id="PS00086">
    <property type="entry name" value="CYTOCHROME_P450"/>
    <property type="match status" value="1"/>
</dbReference>
<gene>
    <name evidence="4" type="primary">GO</name>
</gene>
<proteinExistence type="evidence at protein level"/>
<keyword id="KW-0349">Heme</keyword>
<keyword id="KW-0408">Iron</keyword>
<keyword id="KW-0472">Membrane</keyword>
<keyword id="KW-0479">Metal-binding</keyword>
<keyword id="KW-0503">Monooxygenase</keyword>
<keyword id="KW-0560">Oxidoreductase</keyword>
<keyword id="KW-0812">Transmembrane</keyword>
<keyword id="KW-1133">Transmembrane helix</keyword>
<organism>
    <name type="scientific">Strychnos nux-vomica</name>
    <name type="common">Poison nut</name>
    <name type="synonym">Strychnine tree</name>
    <dbReference type="NCBI Taxonomy" id="28545"/>
    <lineage>
        <taxon>Eukaryota</taxon>
        <taxon>Viridiplantae</taxon>
        <taxon>Streptophyta</taxon>
        <taxon>Embryophyta</taxon>
        <taxon>Tracheophyta</taxon>
        <taxon>Spermatophyta</taxon>
        <taxon>Magnoliopsida</taxon>
        <taxon>eudicotyledons</taxon>
        <taxon>Gunneridae</taxon>
        <taxon>Pentapetalae</taxon>
        <taxon>asterids</taxon>
        <taxon>lamiids</taxon>
        <taxon>Gentianales</taxon>
        <taxon>Loganiaceae</taxon>
        <taxon>Strychnos</taxon>
    </lineage>
</organism>
<accession>P0DO79</accession>
<accession>A0AAQ5BIK6</accession>
<protein>
    <recommendedName>
        <fullName evidence="4">Geissoschizine oxidase</fullName>
        <shortName evidence="4">SnvGO</shortName>
        <ecNumber evidence="3">1.14.19.80</ecNumber>
    </recommendedName>
    <alternativeName>
        <fullName evidence="4">CYP450 monooxygenase GO</fullName>
    </alternativeName>
    <alternativeName>
        <fullName evidence="4">Cytochrome P450 GO</fullName>
    </alternativeName>
</protein>
<reference key="1">
    <citation type="journal article" date="2022" name="Nature">
        <title>Biosynthesis of strychnine.</title>
        <authorList>
            <person name="Hong B."/>
            <person name="Grzech D."/>
            <person name="Caputi L."/>
            <person name="Sonawane P."/>
            <person name="Lopez C.E.R."/>
            <person name="Kamileen M.O."/>
            <person name="Hernandez Lozada N.J."/>
            <person name="Grabe V."/>
            <person name="O'Connor S.E."/>
        </authorList>
    </citation>
    <scope>NUCLEOTIDE SEQUENCE [MRNA]</scope>
    <scope>FUNCTION</scope>
    <scope>CATALYTIC ACTIVITY</scope>
    <scope>PATHWAY</scope>
    <scope>TISSUE SPECIFICITY</scope>
</reference>
<name>GO_STRNX</name>
<evidence type="ECO:0000250" key="1">
    <source>
        <dbReference type="UniProtKB" id="Q96242"/>
    </source>
</evidence>
<evidence type="ECO:0000255" key="2"/>
<evidence type="ECO:0000269" key="3">
    <source>
    </source>
</evidence>
<evidence type="ECO:0000303" key="4">
    <source>
    </source>
</evidence>
<evidence type="ECO:0000305" key="5"/>
<sequence>MMQMMEFSFSSPAFFLLLPFLFLLIKPLISRKRGPKLPPGPKKLPIVGNLFHMEGALPHLALKKMTDKYGPICHLKLGELEAVVVSSAELAKEVLNTHAVTFADRPETNVSKIVMYNNSGMTFARYGDYFKLLRQIYASELLSPRCVRSSTNHMEDELSKFVVKIQAEAGKPIFLLERVKSYLFAVLFDSMIGGACKCPERYIEAAKELSANSAAMRLEDFFPSVTLLPKLSGFNTVLAKLKKKIDDLLDDLISEREKIQANATGPMEEHMLDVLLKLRNGSGSETKVPITNEDVKAVVFELMLSNLSTAATEEWAMSEMMRSPKVFKKAQDEVRRVFKGKNRICASELHNLEYLKLVIKEALRMHPPAPLLFPRKAREDCEIGGYTIPVGTMVWVNYWAVGRDPQLWHDADKFEPERFSNVPMDFNGSHSELIPFGAGRRICPGIAYGVTNLELLLSALLYHFDWELPNGKQPEEIDMDEFYGSGCIRKNPLALIPKVVIPCQA</sequence>
<feature type="chain" id="PRO_0000461112" description="Geissoschizine oxidase">
    <location>
        <begin position="1"/>
        <end position="505"/>
    </location>
</feature>
<feature type="transmembrane region" description="Helical" evidence="2">
    <location>
        <begin position="9"/>
        <end position="29"/>
    </location>
</feature>
<feature type="binding site" description="axial binding residue" evidence="1">
    <location>
        <position position="443"/>
    </location>
    <ligand>
        <name>heme</name>
        <dbReference type="ChEBI" id="CHEBI:30413"/>
    </ligand>
    <ligandPart>
        <name>Fe</name>
        <dbReference type="ChEBI" id="CHEBI:18248"/>
    </ligandPart>
</feature>
<comment type="function">
    <text evidence="3">Monooxygenase involved in the biosynthesis of curare monoterpene indole alkaloids (MIAs), natural products such as strychnine, a neurotoxic compound used as a pesticide to control rodents, and its pharmacologically active derivatives, including brucine, used to regulate blood pressure (PubMed:35794473). Curare alkaloids act as animal glycine receptor antagonists (PubMed:35794473). Catalyzes the conversion of geissoschizine to dehydropreakuammicine by cyclization, which is spontaneously converted into akuammicine by aromatization (PubMed:35794473).</text>
</comment>
<comment type="catalytic activity">
    <reaction evidence="3">
        <text>(19E)-geissoschizine + reduced [NADPH--hemoprotein reductase] + O2 = akuammicine + formate + oxidized [NADPH--hemoprotein reductase] + H2O + H(+)</text>
        <dbReference type="Rhea" id="RHEA:58520"/>
        <dbReference type="Rhea" id="RHEA-COMP:11964"/>
        <dbReference type="Rhea" id="RHEA-COMP:11965"/>
        <dbReference type="ChEBI" id="CHEBI:15377"/>
        <dbReference type="ChEBI" id="CHEBI:15378"/>
        <dbReference type="ChEBI" id="CHEBI:15379"/>
        <dbReference type="ChEBI" id="CHEBI:15740"/>
        <dbReference type="ChEBI" id="CHEBI:17037"/>
        <dbReference type="ChEBI" id="CHEBI:57618"/>
        <dbReference type="ChEBI" id="CHEBI:58210"/>
        <dbReference type="ChEBI" id="CHEBI:142754"/>
        <dbReference type="EC" id="1.14.19.80"/>
    </reaction>
    <physiologicalReaction direction="left-to-right" evidence="3">
        <dbReference type="Rhea" id="RHEA:58521"/>
    </physiologicalReaction>
</comment>
<comment type="catalytic activity">
    <reaction evidence="3">
        <text>(19E)-geissoschizine + reduced [NADPH--hemoprotein reductase] + O2 = 3,17-didehydrostemmadenine + oxidized [NADPH--hemoprotein reductase] + 2 H2O</text>
        <dbReference type="Rhea" id="RHEA:58516"/>
        <dbReference type="Rhea" id="RHEA-COMP:11964"/>
        <dbReference type="Rhea" id="RHEA-COMP:11965"/>
        <dbReference type="ChEBI" id="CHEBI:15377"/>
        <dbReference type="ChEBI" id="CHEBI:15379"/>
        <dbReference type="ChEBI" id="CHEBI:17037"/>
        <dbReference type="ChEBI" id="CHEBI:57618"/>
        <dbReference type="ChEBI" id="CHEBI:58210"/>
        <dbReference type="ChEBI" id="CHEBI:142668"/>
    </reaction>
    <physiologicalReaction direction="left-to-right" evidence="3">
        <dbReference type="Rhea" id="RHEA:58517"/>
    </physiologicalReaction>
</comment>
<comment type="catalytic activity">
    <reaction evidence="3">
        <text>3,17-didehydrostemmadenine = 17-dehydropreakuammicine</text>
        <dbReference type="Rhea" id="RHEA:79587"/>
        <dbReference type="ChEBI" id="CHEBI:142668"/>
        <dbReference type="ChEBI" id="CHEBI:230469"/>
    </reaction>
    <physiologicalReaction direction="left-to-right" evidence="3">
        <dbReference type="Rhea" id="RHEA:79588"/>
    </physiologicalReaction>
</comment>
<comment type="cofactor">
    <cofactor evidence="1">
        <name>heme</name>
        <dbReference type="ChEBI" id="CHEBI:30413"/>
    </cofactor>
</comment>
<comment type="pathway">
    <text evidence="3">Alkaloid biosynthesis.</text>
</comment>
<comment type="subcellular location">
    <subcellularLocation>
        <location evidence="2">Membrane</location>
        <topology evidence="2">Single-pass membrane protein</topology>
    </subcellularLocation>
</comment>
<comment type="tissue specificity">
    <text evidence="3">Mainly expressed in roots.</text>
</comment>
<comment type="similarity">
    <text evidence="5">Belongs to the cytochrome P450 family.</text>
</comment>